<protein>
    <recommendedName>
        <fullName>Metallothionein-like protein 1B</fullName>
        <shortName>MT-1B</shortName>
    </recommendedName>
</protein>
<organism>
    <name type="scientific">Vicia faba</name>
    <name type="common">Broad bean</name>
    <name type="synonym">Faba vulgaris</name>
    <dbReference type="NCBI Taxonomy" id="3906"/>
    <lineage>
        <taxon>Eukaryota</taxon>
        <taxon>Viridiplantae</taxon>
        <taxon>Streptophyta</taxon>
        <taxon>Embryophyta</taxon>
        <taxon>Tracheophyta</taxon>
        <taxon>Spermatophyta</taxon>
        <taxon>Magnoliopsida</taxon>
        <taxon>eudicotyledons</taxon>
        <taxon>Gunneridae</taxon>
        <taxon>Pentapetalae</taxon>
        <taxon>rosids</taxon>
        <taxon>fabids</taxon>
        <taxon>Fabales</taxon>
        <taxon>Fabaceae</taxon>
        <taxon>Papilionoideae</taxon>
        <taxon>50 kb inversion clade</taxon>
        <taxon>NPAAA clade</taxon>
        <taxon>Hologalegina</taxon>
        <taxon>IRL clade</taxon>
        <taxon>Fabeae</taxon>
        <taxon>Vicia</taxon>
    </lineage>
</organism>
<dbReference type="EMBL" id="X91078">
    <property type="protein sequence ID" value="CAA62552.1"/>
    <property type="molecule type" value="mRNA"/>
</dbReference>
<dbReference type="PIR" id="T12188">
    <property type="entry name" value="T12188"/>
</dbReference>
<dbReference type="GO" id="GO:0046872">
    <property type="term" value="F:metal ion binding"/>
    <property type="evidence" value="ECO:0007669"/>
    <property type="project" value="UniProtKB-KW"/>
</dbReference>
<dbReference type="InterPro" id="IPR000347">
    <property type="entry name" value="Metalthion_15p"/>
</dbReference>
<dbReference type="PANTHER" id="PTHR33543:SF10">
    <property type="entry name" value="METALLOTHIONEIN-LIKE PROTEIN"/>
    <property type="match status" value="1"/>
</dbReference>
<dbReference type="PANTHER" id="PTHR33543">
    <property type="entry name" value="METALLOTHIONEIN-LIKE PROTEIN 2A"/>
    <property type="match status" value="1"/>
</dbReference>
<dbReference type="Pfam" id="PF01439">
    <property type="entry name" value="Metallothio_2"/>
    <property type="match status" value="1"/>
</dbReference>
<sequence length="75" mass="7750">MSGCNCGSSCNCGDSCKCNKRSSGLSYSEVETKETVILGVGPAKIQFEGAEMSFASKEGGCKCGDNCTCDPCNCK</sequence>
<name>MT1B_VICFA</name>
<evidence type="ECO:0000305" key="1"/>
<comment type="function">
    <text>Metallothioneins have a high content of cysteine residues that bind various heavy metals.</text>
</comment>
<comment type="similarity">
    <text evidence="1">Belongs to the metallothionein superfamily. Type 15 family.</text>
</comment>
<keyword id="KW-0479">Metal-binding</keyword>
<keyword id="KW-0480">Metal-thiolate cluster</keyword>
<gene>
    <name type="primary">MT1B</name>
</gene>
<feature type="chain" id="PRO_0000197383" description="Metallothionein-like protein 1B">
    <location>
        <begin position="1"/>
        <end position="75"/>
    </location>
</feature>
<accession>Q41670</accession>
<reference key="1">
    <citation type="journal article" date="1997" name="Plant Mol. Biol.">
        <title>Analysis of type 1 metallothionein cDNAs in Vicia faba.</title>
        <authorList>
            <person name="Foley R.C."/>
            <person name="Liang Z.M."/>
            <person name="Singh K.B."/>
        </authorList>
    </citation>
    <scope>NUCLEOTIDE SEQUENCE [MRNA]</scope>
    <source>
        <tissue>Leaf</tissue>
    </source>
</reference>
<proteinExistence type="inferred from homology"/>